<reference key="1">
    <citation type="journal article" date="2004" name="Genome Res.">
        <title>A phylogeny of Caenorhabditis reveals frequent loss of introns during nematode evolution.</title>
        <authorList>
            <person name="Cho S."/>
            <person name="Jin S.W."/>
            <person name="Cohen A."/>
            <person name="Ellis R.E."/>
        </authorList>
    </citation>
    <scope>NUCLEOTIDE SEQUENCE [GENOMIC DNA / MRNA]</scope>
</reference>
<reference key="2">
    <citation type="journal article" date="2003" name="PLoS Biol.">
        <title>The genome sequence of Caenorhabditis briggsae: a platform for comparative genomics.</title>
        <authorList>
            <person name="Stein L.D."/>
            <person name="Bao Z."/>
            <person name="Blasiar D."/>
            <person name="Blumenthal T."/>
            <person name="Brent M.R."/>
            <person name="Chen N."/>
            <person name="Chinwalla A."/>
            <person name="Clarke L."/>
            <person name="Clee C."/>
            <person name="Coghlan A."/>
            <person name="Coulson A."/>
            <person name="D'Eustachio P."/>
            <person name="Fitch D.H.A."/>
            <person name="Fulton L.A."/>
            <person name="Fulton R.E."/>
            <person name="Griffiths-Jones S."/>
            <person name="Harris T.W."/>
            <person name="Hillier L.W."/>
            <person name="Kamath R."/>
            <person name="Kuwabara P.E."/>
            <person name="Mardis E.R."/>
            <person name="Marra M.A."/>
            <person name="Miner T.L."/>
            <person name="Minx P."/>
            <person name="Mullikin J.C."/>
            <person name="Plumb R.W."/>
            <person name="Rogers J."/>
            <person name="Schein J.E."/>
            <person name="Sohrmann M."/>
            <person name="Spieth J."/>
            <person name="Stajich J.E."/>
            <person name="Wei C."/>
            <person name="Willey D."/>
            <person name="Wilson R.K."/>
            <person name="Durbin R.M."/>
            <person name="Waterston R.H."/>
        </authorList>
    </citation>
    <scope>NUCLEOTIDE SEQUENCE [LARGE SCALE GENOMIC DNA]</scope>
    <source>
        <strain>AF16</strain>
    </source>
</reference>
<sequence length="585" mass="65527">MQHQLKACGDVKTSSRAQQNHRRSTAASAKRSVGAGNSFLATDVTNLEMNSNFMTRKLKKNGNGVIGSPLSNGYFGAQLTANSFNYTPQANPYSNLDFQMAMGSGDVPSLMGMPVHKPSMMLQSDPSMDLTQFTEELQAIQNMPFQPISSSQAALQAFLAANEAASIGSYGFSKSQMLPSNSMRVSGARKNRIVEVKNQNDRLFLVLSDPQASVSTRPTLVPLTRPLQSVAQSCLDLTKKQPFSTEPLYSRKVFIGGLPIDVPDEEVYVTFGSFGKVLIDWPRRPEHNGRASDMYESEMGRRNLRSVSGYVFLVFTHEDSVQDLVNACEFYDGKYYLQLSSPTMQDKAVQVRPWRLSDIDYFSEEKVTVDPRRTVFIGGVPRPTRACDLARSLQDYYGKVSYVGIDIDPELKYPKGAARVTFATAQSFVRAISGRFVQVTHAETNKRVEIKPYVMEDQYCDECEGDLCKHNYAPYYCGDSSCLQYYCEGCWDRMHYEMGQSRADHRPMVRTGDQTRILPRPPHHPAAHHSHQRPQYLLHQDQLDNHHSSRGNSSVISRIVNRNSATMLDHVPGKPFSAISASYGY</sequence>
<dbReference type="EMBL" id="AY589642">
    <property type="protein sequence ID" value="AAT72426.1"/>
    <property type="molecule type" value="Genomic_DNA"/>
</dbReference>
<dbReference type="EMBL" id="AY589592">
    <property type="protein sequence ID" value="AAT72409.1"/>
    <property type="molecule type" value="mRNA"/>
</dbReference>
<dbReference type="EMBL" id="HE601459">
    <property type="protein sequence ID" value="CAP29629.3"/>
    <property type="molecule type" value="Genomic_DNA"/>
</dbReference>
<dbReference type="RefSeq" id="XP_002641780.1">
    <property type="nucleotide sequence ID" value="XM_002641734.1"/>
</dbReference>
<dbReference type="SMR" id="Q6E3D0"/>
<dbReference type="FunCoup" id="Q6E3D0">
    <property type="interactions" value="5"/>
</dbReference>
<dbReference type="STRING" id="6238.Q6E3D0"/>
<dbReference type="EnsemblMetazoa" id="CBG10126.1">
    <property type="protein sequence ID" value="CBG10126.1"/>
    <property type="gene ID" value="WBGene00031597"/>
</dbReference>
<dbReference type="KEGG" id="cbr:CBG_10126"/>
<dbReference type="CTD" id="8583774"/>
<dbReference type="WormBase" id="CBG10126">
    <property type="protein sequence ID" value="CBP37601"/>
    <property type="gene ID" value="WBGene00031597"/>
    <property type="gene designation" value="Cbr-cpb-1"/>
</dbReference>
<dbReference type="eggNOG" id="KOG0129">
    <property type="taxonomic scope" value="Eukaryota"/>
</dbReference>
<dbReference type="HOGENOM" id="CLU_035644_0_0_1"/>
<dbReference type="InParanoid" id="Q6E3D0"/>
<dbReference type="OMA" id="WPRRPEH"/>
<dbReference type="Proteomes" id="UP000008549">
    <property type="component" value="Unassembled WGS sequence"/>
</dbReference>
<dbReference type="GO" id="GO:0005737">
    <property type="term" value="C:cytoplasm"/>
    <property type="evidence" value="ECO:0000318"/>
    <property type="project" value="GO_Central"/>
</dbReference>
<dbReference type="GO" id="GO:0043005">
    <property type="term" value="C:neuron projection"/>
    <property type="evidence" value="ECO:0000318"/>
    <property type="project" value="GO_Central"/>
</dbReference>
<dbReference type="GO" id="GO:0005634">
    <property type="term" value="C:nucleus"/>
    <property type="evidence" value="ECO:0000318"/>
    <property type="project" value="GO_Central"/>
</dbReference>
<dbReference type="GO" id="GO:0045202">
    <property type="term" value="C:synapse"/>
    <property type="evidence" value="ECO:0000318"/>
    <property type="project" value="GO_Central"/>
</dbReference>
<dbReference type="GO" id="GO:0003730">
    <property type="term" value="F:mRNA 3'-UTR binding"/>
    <property type="evidence" value="ECO:0000318"/>
    <property type="project" value="GO_Central"/>
</dbReference>
<dbReference type="GO" id="GO:0000900">
    <property type="term" value="F:mRNA regulatory element binding translation repressor activity"/>
    <property type="evidence" value="ECO:0000318"/>
    <property type="project" value="GO_Central"/>
</dbReference>
<dbReference type="GO" id="GO:0043022">
    <property type="term" value="F:ribosome binding"/>
    <property type="evidence" value="ECO:0000318"/>
    <property type="project" value="GO_Central"/>
</dbReference>
<dbReference type="GO" id="GO:0008135">
    <property type="term" value="F:translation factor activity, RNA binding"/>
    <property type="evidence" value="ECO:0000318"/>
    <property type="project" value="GO_Central"/>
</dbReference>
<dbReference type="GO" id="GO:0030154">
    <property type="term" value="P:cell differentiation"/>
    <property type="evidence" value="ECO:0007669"/>
    <property type="project" value="UniProtKB-KW"/>
</dbReference>
<dbReference type="GO" id="GO:0051321">
    <property type="term" value="P:meiotic cell cycle"/>
    <property type="evidence" value="ECO:0007669"/>
    <property type="project" value="EnsemblMetazoa"/>
</dbReference>
<dbReference type="GO" id="GO:2000766">
    <property type="term" value="P:negative regulation of cytoplasmic translation"/>
    <property type="evidence" value="ECO:0000318"/>
    <property type="project" value="GO_Central"/>
</dbReference>
<dbReference type="GO" id="GO:0007283">
    <property type="term" value="P:spermatogenesis"/>
    <property type="evidence" value="ECO:0007669"/>
    <property type="project" value="UniProtKB-KW"/>
</dbReference>
<dbReference type="CDD" id="cd19757">
    <property type="entry name" value="Bbox1"/>
    <property type="match status" value="1"/>
</dbReference>
<dbReference type="CDD" id="cd12724">
    <property type="entry name" value="RRM1_CPEB2_like"/>
    <property type="match status" value="1"/>
</dbReference>
<dbReference type="CDD" id="cd12726">
    <property type="entry name" value="RRM2_CPEB2_like"/>
    <property type="match status" value="1"/>
</dbReference>
<dbReference type="FunFam" id="4.10.640.40:FF:000001">
    <property type="entry name" value="Cytoplasmic polyadenylation element-binding 2 isoform X2"/>
    <property type="match status" value="1"/>
</dbReference>
<dbReference type="FunFam" id="3.30.70.330:FF:001391">
    <property type="entry name" value="Cytoplasmic polyadenylation element-binding protein 1"/>
    <property type="match status" value="1"/>
</dbReference>
<dbReference type="Gene3D" id="3.30.70.330">
    <property type="match status" value="2"/>
</dbReference>
<dbReference type="Gene3D" id="4.10.640.40">
    <property type="entry name" value="Cytoplasmic polyadenylation element-binding protein, ZZ domain"/>
    <property type="match status" value="1"/>
</dbReference>
<dbReference type="InterPro" id="IPR032296">
    <property type="entry name" value="CEBP_ZZ"/>
</dbReference>
<dbReference type="InterPro" id="IPR038446">
    <property type="entry name" value="CEBP_ZZ_sf"/>
</dbReference>
<dbReference type="InterPro" id="IPR034819">
    <property type="entry name" value="CPEB"/>
</dbReference>
<dbReference type="InterPro" id="IPR012677">
    <property type="entry name" value="Nucleotide-bd_a/b_plait_sf"/>
</dbReference>
<dbReference type="InterPro" id="IPR035979">
    <property type="entry name" value="RBD_domain_sf"/>
</dbReference>
<dbReference type="InterPro" id="IPR000504">
    <property type="entry name" value="RRM_dom"/>
</dbReference>
<dbReference type="PANTHER" id="PTHR12566">
    <property type="entry name" value="CYTOPLASMIC POLYADENYLATION ELEMENT BINDING PROTEIN CPEB"/>
    <property type="match status" value="1"/>
</dbReference>
<dbReference type="PANTHER" id="PTHR12566:SF17">
    <property type="entry name" value="CYTOPLASMIC POLYADENYLATION ELEMENT-BINDING PROTEIN 1"/>
    <property type="match status" value="1"/>
</dbReference>
<dbReference type="Pfam" id="PF16366">
    <property type="entry name" value="CEBP_ZZ"/>
    <property type="match status" value="1"/>
</dbReference>
<dbReference type="Pfam" id="PF16367">
    <property type="entry name" value="RRM_7"/>
    <property type="match status" value="1"/>
</dbReference>
<dbReference type="SMART" id="SM00360">
    <property type="entry name" value="RRM"/>
    <property type="match status" value="2"/>
</dbReference>
<dbReference type="SUPFAM" id="SSF54928">
    <property type="entry name" value="RNA-binding domain, RBD"/>
    <property type="match status" value="1"/>
</dbReference>
<dbReference type="PROSITE" id="PS50102">
    <property type="entry name" value="RRM"/>
    <property type="match status" value="2"/>
</dbReference>
<accession>Q6E3D0</accession>
<accession>A8XAG1</accession>
<accession>Q61IP6</accession>
<evidence type="ECO:0000250" key="1"/>
<evidence type="ECO:0000255" key="2">
    <source>
        <dbReference type="PROSITE-ProRule" id="PRU00176"/>
    </source>
</evidence>
<evidence type="ECO:0000256" key="3">
    <source>
        <dbReference type="SAM" id="MobiDB-lite"/>
    </source>
</evidence>
<organism>
    <name type="scientific">Caenorhabditis briggsae</name>
    <dbReference type="NCBI Taxonomy" id="6238"/>
    <lineage>
        <taxon>Eukaryota</taxon>
        <taxon>Metazoa</taxon>
        <taxon>Ecdysozoa</taxon>
        <taxon>Nematoda</taxon>
        <taxon>Chromadorea</taxon>
        <taxon>Rhabditida</taxon>
        <taxon>Rhabditina</taxon>
        <taxon>Rhabditomorpha</taxon>
        <taxon>Rhabditoidea</taxon>
        <taxon>Rhabditidae</taxon>
        <taxon>Peloderinae</taxon>
        <taxon>Caenorhabditis</taxon>
    </lineage>
</organism>
<feature type="chain" id="PRO_0000081508" description="Cytoplasmic polyadenylation element-binding protein 1">
    <location>
        <begin position="1"/>
        <end position="585"/>
    </location>
</feature>
<feature type="domain" description="RRM 1" evidence="2">
    <location>
        <begin position="251"/>
        <end position="356"/>
    </location>
</feature>
<feature type="domain" description="RRM 2" evidence="2">
    <location>
        <begin position="373"/>
        <end position="444"/>
    </location>
</feature>
<feature type="region of interest" description="Disordered" evidence="3">
    <location>
        <begin position="1"/>
        <end position="32"/>
    </location>
</feature>
<feature type="region of interest" description="Disordered" evidence="3">
    <location>
        <begin position="513"/>
        <end position="533"/>
    </location>
</feature>
<feature type="compositionally biased region" description="Basic residues" evidence="3">
    <location>
        <begin position="521"/>
        <end position="532"/>
    </location>
</feature>
<gene>
    <name type="primary">cpb-1</name>
    <name type="ORF">CBG10126</name>
</gene>
<proteinExistence type="evidence at transcript level"/>
<protein>
    <recommendedName>
        <fullName>Cytoplasmic polyadenylation element-binding protein 1</fullName>
    </recommendedName>
</protein>
<keyword id="KW-0217">Developmental protein</keyword>
<keyword id="KW-0221">Differentiation</keyword>
<keyword id="KW-1185">Reference proteome</keyword>
<keyword id="KW-0677">Repeat</keyword>
<keyword id="KW-0694">RNA-binding</keyword>
<keyword id="KW-0744">Spermatogenesis</keyword>
<name>CPB1_CAEBR</name>
<comment type="function">
    <text evidence="1">Cytoplasmic polyadenylation element binding protein that binds to and regulates the translation of specific mRNAs. Essential for progression through meiosis. Involved in spermatogenesis (By similarity).</text>
</comment>
<comment type="subunit">
    <text evidence="1">Interacts with fbf-1.</text>
</comment>